<reference key="1">
    <citation type="journal article" date="2004" name="Science">
        <title>The complete genome sequence of Propionibacterium acnes, a commensal of human skin.</title>
        <authorList>
            <person name="Brueggemann H."/>
            <person name="Henne A."/>
            <person name="Hoster F."/>
            <person name="Liesegang H."/>
            <person name="Wiezer A."/>
            <person name="Strittmatter A."/>
            <person name="Hujer S."/>
            <person name="Duerre P."/>
            <person name="Gottschalk G."/>
        </authorList>
    </citation>
    <scope>NUCLEOTIDE SEQUENCE [LARGE SCALE GENOMIC DNA]</scope>
    <source>
        <strain>DSM 16379 / KPA171202</strain>
    </source>
</reference>
<gene>
    <name evidence="1" type="primary">rpoZ</name>
    <name type="ordered locus">PPA1191</name>
</gene>
<dbReference type="EC" id="2.7.7.6" evidence="1"/>
<dbReference type="EMBL" id="AE017283">
    <property type="protein sequence ID" value="AAT82940.1"/>
    <property type="molecule type" value="Genomic_DNA"/>
</dbReference>
<dbReference type="RefSeq" id="WP_002516821.1">
    <property type="nucleotide sequence ID" value="NZ_CP025935.1"/>
</dbReference>
<dbReference type="SMR" id="Q6A8H5"/>
<dbReference type="EnsemblBacteria" id="AAT82940">
    <property type="protein sequence ID" value="AAT82940"/>
    <property type="gene ID" value="PPA1191"/>
</dbReference>
<dbReference type="GeneID" id="92880830"/>
<dbReference type="KEGG" id="pac:PPA1191"/>
<dbReference type="eggNOG" id="COG1758">
    <property type="taxonomic scope" value="Bacteria"/>
</dbReference>
<dbReference type="HOGENOM" id="CLU_125406_1_0_11"/>
<dbReference type="Proteomes" id="UP000000603">
    <property type="component" value="Chromosome"/>
</dbReference>
<dbReference type="GO" id="GO:0000428">
    <property type="term" value="C:DNA-directed RNA polymerase complex"/>
    <property type="evidence" value="ECO:0007669"/>
    <property type="project" value="UniProtKB-KW"/>
</dbReference>
<dbReference type="GO" id="GO:0003677">
    <property type="term" value="F:DNA binding"/>
    <property type="evidence" value="ECO:0007669"/>
    <property type="project" value="UniProtKB-UniRule"/>
</dbReference>
<dbReference type="GO" id="GO:0003899">
    <property type="term" value="F:DNA-directed RNA polymerase activity"/>
    <property type="evidence" value="ECO:0007669"/>
    <property type="project" value="UniProtKB-UniRule"/>
</dbReference>
<dbReference type="GO" id="GO:0006351">
    <property type="term" value="P:DNA-templated transcription"/>
    <property type="evidence" value="ECO:0007669"/>
    <property type="project" value="UniProtKB-UniRule"/>
</dbReference>
<dbReference type="Gene3D" id="3.90.940.10">
    <property type="match status" value="1"/>
</dbReference>
<dbReference type="HAMAP" id="MF_00366">
    <property type="entry name" value="RNApol_bact_RpoZ"/>
    <property type="match status" value="1"/>
</dbReference>
<dbReference type="InterPro" id="IPR003716">
    <property type="entry name" value="DNA-dir_RNA_pol_omega"/>
</dbReference>
<dbReference type="InterPro" id="IPR006110">
    <property type="entry name" value="Pol_omega/Rpo6/RPB6"/>
</dbReference>
<dbReference type="InterPro" id="IPR036161">
    <property type="entry name" value="RPB6/omega-like_sf"/>
</dbReference>
<dbReference type="NCBIfam" id="TIGR00690">
    <property type="entry name" value="rpoZ"/>
    <property type="match status" value="1"/>
</dbReference>
<dbReference type="PANTHER" id="PTHR34476">
    <property type="entry name" value="DNA-DIRECTED RNA POLYMERASE SUBUNIT OMEGA"/>
    <property type="match status" value="1"/>
</dbReference>
<dbReference type="PANTHER" id="PTHR34476:SF1">
    <property type="entry name" value="DNA-DIRECTED RNA POLYMERASE SUBUNIT OMEGA"/>
    <property type="match status" value="1"/>
</dbReference>
<dbReference type="Pfam" id="PF01192">
    <property type="entry name" value="RNA_pol_Rpb6"/>
    <property type="match status" value="1"/>
</dbReference>
<dbReference type="SMART" id="SM01409">
    <property type="entry name" value="RNA_pol_Rpb6"/>
    <property type="match status" value="1"/>
</dbReference>
<dbReference type="SUPFAM" id="SSF63562">
    <property type="entry name" value="RPB6/omega subunit-like"/>
    <property type="match status" value="1"/>
</dbReference>
<protein>
    <recommendedName>
        <fullName evidence="1">DNA-directed RNA polymerase subunit omega</fullName>
        <shortName evidence="1">RNAP omega subunit</shortName>
        <ecNumber evidence="1">2.7.7.6</ecNumber>
    </recommendedName>
    <alternativeName>
        <fullName evidence="1">RNA polymerase omega subunit</fullName>
    </alternativeName>
    <alternativeName>
        <fullName evidence="1">Transcriptase subunit omega</fullName>
    </alternativeName>
</protein>
<feature type="chain" id="PRO_0000237488" description="DNA-directed RNA polymerase subunit omega">
    <location>
        <begin position="1"/>
        <end position="115"/>
    </location>
</feature>
<name>RPOZ_CUTAK</name>
<organism>
    <name type="scientific">Cutibacterium acnes (strain DSM 16379 / KPA171202)</name>
    <name type="common">Propionibacterium acnes</name>
    <dbReference type="NCBI Taxonomy" id="267747"/>
    <lineage>
        <taxon>Bacteria</taxon>
        <taxon>Bacillati</taxon>
        <taxon>Actinomycetota</taxon>
        <taxon>Actinomycetes</taxon>
        <taxon>Propionibacteriales</taxon>
        <taxon>Propionibacteriaceae</taxon>
        <taxon>Cutibacterium</taxon>
    </lineage>
</organism>
<comment type="function">
    <text evidence="1">Promotes RNA polymerase assembly. Latches the N- and C-terminal regions of the beta' subunit thereby facilitating its interaction with the beta and alpha subunits.</text>
</comment>
<comment type="catalytic activity">
    <reaction evidence="1">
        <text>RNA(n) + a ribonucleoside 5'-triphosphate = RNA(n+1) + diphosphate</text>
        <dbReference type="Rhea" id="RHEA:21248"/>
        <dbReference type="Rhea" id="RHEA-COMP:14527"/>
        <dbReference type="Rhea" id="RHEA-COMP:17342"/>
        <dbReference type="ChEBI" id="CHEBI:33019"/>
        <dbReference type="ChEBI" id="CHEBI:61557"/>
        <dbReference type="ChEBI" id="CHEBI:140395"/>
        <dbReference type="EC" id="2.7.7.6"/>
    </reaction>
</comment>
<comment type="subunit">
    <text evidence="1">The RNAP catalytic core consists of 2 alpha, 1 beta, 1 beta' and 1 omega subunit. When a sigma factor is associated with the core the holoenzyme is formed, which can initiate transcription.</text>
</comment>
<comment type="similarity">
    <text evidence="1">Belongs to the RNA polymerase subunit omega family.</text>
</comment>
<sequence>MTETTPEGIVNPPIDQLLEHVDSKYRLVLFAAKRARQINAYYSQLAEGLLENVGPLVETTNQEKPLSIAMREIQAGVVEAHEMDAEEIAAQAAAAQEAPAIELDDPFADLADPNA</sequence>
<accession>Q6A8H5</accession>
<keyword id="KW-0240">DNA-directed RNA polymerase</keyword>
<keyword id="KW-0548">Nucleotidyltransferase</keyword>
<keyword id="KW-0804">Transcription</keyword>
<keyword id="KW-0808">Transferase</keyword>
<proteinExistence type="inferred from homology"/>
<evidence type="ECO:0000255" key="1">
    <source>
        <dbReference type="HAMAP-Rule" id="MF_00366"/>
    </source>
</evidence>